<reference key="1">
    <citation type="journal article" date="2002" name="Proc. Natl. Acad. Sci. U.S.A.">
        <title>Extensive mosaic structure revealed by the complete genome sequence of uropathogenic Escherichia coli.</title>
        <authorList>
            <person name="Welch R.A."/>
            <person name="Burland V."/>
            <person name="Plunkett G. III"/>
            <person name="Redford P."/>
            <person name="Roesch P."/>
            <person name="Rasko D."/>
            <person name="Buckles E.L."/>
            <person name="Liou S.-R."/>
            <person name="Boutin A."/>
            <person name="Hackett J."/>
            <person name="Stroud D."/>
            <person name="Mayhew G.F."/>
            <person name="Rose D.J."/>
            <person name="Zhou S."/>
            <person name="Schwartz D.C."/>
            <person name="Perna N.T."/>
            <person name="Mobley H.L.T."/>
            <person name="Donnenberg M.S."/>
            <person name="Blattner F.R."/>
        </authorList>
    </citation>
    <scope>NUCLEOTIDE SEQUENCE [LARGE SCALE GENOMIC DNA]</scope>
    <source>
        <strain>CFT073 / ATCC 700928 / UPEC</strain>
    </source>
</reference>
<name>EX7L_ECOL6</name>
<proteinExistence type="inferred from homology"/>
<comment type="function">
    <text evidence="1">Bidirectionally degrades single-stranded DNA into large acid-insoluble oligonucleotides, which are then degraded further into small acid-soluble oligonucleotides.</text>
</comment>
<comment type="catalytic activity">
    <reaction evidence="1">
        <text>Exonucleolytic cleavage in either 5'- to 3'- or 3'- to 5'-direction to yield nucleoside 5'-phosphates.</text>
        <dbReference type="EC" id="3.1.11.6"/>
    </reaction>
</comment>
<comment type="subunit">
    <text evidence="1">Heterooligomer composed of large and small subunits.</text>
</comment>
<comment type="subcellular location">
    <subcellularLocation>
        <location evidence="1">Cytoplasm</location>
    </subcellularLocation>
</comment>
<comment type="similarity">
    <text evidence="1">Belongs to the XseA family.</text>
</comment>
<sequence>MLPSQSPAIFTVSRLNQTVRLLLEHEMGQVWISGEISNFTQPASGHWYFTLKDDTAQVRCAMFRNSNRRVTFRPQHGQQVLVRANITLYEPRGDYQIIVESMQPAGEGLLQQKYEQLKAKLQAEGLFELQYKKSLPSPAHCVGVITSKTGAALHDILHVLKRRDPSLPVIIYSTAVQGDDAPGQIVRAIELANKRNECDVLIVGRGGGSLEDLWSFNDERVARAIFASRIPIVSAVGHETDVTIADFVADLRAPTPSAAAEVVSRNQQELLRQVQSTRQRLEMAMDYYLANRTRRFTQIHHRLQQQHPQLRLARQQTMLERLQKRMSFALENQLKRAGQQQQRLTRQLVQQNPQSRIHRAQTRIQQLEYRLAETLRAQLSATRERFGNAVTHLEAVSPLSTLARGYSVTSAADGAVLKQVKQVKVGETLTTRLGDGVVISEVSAVTKTRKSRKKTSNP</sequence>
<protein>
    <recommendedName>
        <fullName evidence="1">Exodeoxyribonuclease 7 large subunit</fullName>
        <ecNumber evidence="1">3.1.11.6</ecNumber>
    </recommendedName>
    <alternativeName>
        <fullName evidence="1">Exodeoxyribonuclease VII large subunit</fullName>
        <shortName evidence="1">Exonuclease VII large subunit</shortName>
    </alternativeName>
</protein>
<evidence type="ECO:0000255" key="1">
    <source>
        <dbReference type="HAMAP-Rule" id="MF_00378"/>
    </source>
</evidence>
<organism>
    <name type="scientific">Escherichia coli O6:H1 (strain CFT073 / ATCC 700928 / UPEC)</name>
    <dbReference type="NCBI Taxonomy" id="199310"/>
    <lineage>
        <taxon>Bacteria</taxon>
        <taxon>Pseudomonadati</taxon>
        <taxon>Pseudomonadota</taxon>
        <taxon>Gammaproteobacteria</taxon>
        <taxon>Enterobacterales</taxon>
        <taxon>Enterobacteriaceae</taxon>
        <taxon>Escherichia</taxon>
    </lineage>
</organism>
<keyword id="KW-0963">Cytoplasm</keyword>
<keyword id="KW-0269">Exonuclease</keyword>
<keyword id="KW-0378">Hydrolase</keyword>
<keyword id="KW-0540">Nuclease</keyword>
<keyword id="KW-1185">Reference proteome</keyword>
<accession>Q8FF64</accession>
<gene>
    <name evidence="1" type="primary">xseA</name>
    <name type="ordered locus">c3028</name>
</gene>
<feature type="chain" id="PRO_0000197846" description="Exodeoxyribonuclease 7 large subunit">
    <location>
        <begin position="1"/>
        <end position="458"/>
    </location>
</feature>
<dbReference type="EC" id="3.1.11.6" evidence="1"/>
<dbReference type="EMBL" id="AE014075">
    <property type="protein sequence ID" value="AAN81478.1"/>
    <property type="molecule type" value="Genomic_DNA"/>
</dbReference>
<dbReference type="RefSeq" id="WP_000937949.1">
    <property type="nucleotide sequence ID" value="NZ_CP051263.1"/>
</dbReference>
<dbReference type="SMR" id="Q8FF64"/>
<dbReference type="STRING" id="199310.c3028"/>
<dbReference type="KEGG" id="ecc:c3028"/>
<dbReference type="eggNOG" id="COG1570">
    <property type="taxonomic scope" value="Bacteria"/>
</dbReference>
<dbReference type="HOGENOM" id="CLU_023625_3_1_6"/>
<dbReference type="BioCyc" id="ECOL199310:C3028-MONOMER"/>
<dbReference type="Proteomes" id="UP000001410">
    <property type="component" value="Chromosome"/>
</dbReference>
<dbReference type="GO" id="GO:0005737">
    <property type="term" value="C:cytoplasm"/>
    <property type="evidence" value="ECO:0007669"/>
    <property type="project" value="UniProtKB-SubCell"/>
</dbReference>
<dbReference type="GO" id="GO:0009318">
    <property type="term" value="C:exodeoxyribonuclease VII complex"/>
    <property type="evidence" value="ECO:0007669"/>
    <property type="project" value="InterPro"/>
</dbReference>
<dbReference type="GO" id="GO:0008855">
    <property type="term" value="F:exodeoxyribonuclease VII activity"/>
    <property type="evidence" value="ECO:0007669"/>
    <property type="project" value="UniProtKB-UniRule"/>
</dbReference>
<dbReference type="GO" id="GO:0003676">
    <property type="term" value="F:nucleic acid binding"/>
    <property type="evidence" value="ECO:0007669"/>
    <property type="project" value="InterPro"/>
</dbReference>
<dbReference type="GO" id="GO:0006308">
    <property type="term" value="P:DNA catabolic process"/>
    <property type="evidence" value="ECO:0007669"/>
    <property type="project" value="UniProtKB-UniRule"/>
</dbReference>
<dbReference type="CDD" id="cd04489">
    <property type="entry name" value="ExoVII_LU_OBF"/>
    <property type="match status" value="1"/>
</dbReference>
<dbReference type="HAMAP" id="MF_00378">
    <property type="entry name" value="Exonuc_7_L"/>
    <property type="match status" value="1"/>
</dbReference>
<dbReference type="InterPro" id="IPR003753">
    <property type="entry name" value="Exonuc_VII_L"/>
</dbReference>
<dbReference type="InterPro" id="IPR020579">
    <property type="entry name" value="Exonuc_VII_lsu_C"/>
</dbReference>
<dbReference type="InterPro" id="IPR025824">
    <property type="entry name" value="OB-fold_nuc-bd_dom"/>
</dbReference>
<dbReference type="NCBIfam" id="TIGR00237">
    <property type="entry name" value="xseA"/>
    <property type="match status" value="1"/>
</dbReference>
<dbReference type="PANTHER" id="PTHR30008">
    <property type="entry name" value="EXODEOXYRIBONUCLEASE 7 LARGE SUBUNIT"/>
    <property type="match status" value="1"/>
</dbReference>
<dbReference type="PANTHER" id="PTHR30008:SF0">
    <property type="entry name" value="EXODEOXYRIBONUCLEASE 7 LARGE SUBUNIT"/>
    <property type="match status" value="1"/>
</dbReference>
<dbReference type="Pfam" id="PF02601">
    <property type="entry name" value="Exonuc_VII_L"/>
    <property type="match status" value="1"/>
</dbReference>
<dbReference type="Pfam" id="PF13742">
    <property type="entry name" value="tRNA_anti_2"/>
    <property type="match status" value="1"/>
</dbReference>